<name>ACE_HAEIX</name>
<organism>
    <name type="scientific">Haematobia irritans exigua</name>
    <name type="common">Buffalo fly</name>
    <dbReference type="NCBI Taxonomy" id="34678"/>
    <lineage>
        <taxon>Eukaryota</taxon>
        <taxon>Metazoa</taxon>
        <taxon>Ecdysozoa</taxon>
        <taxon>Arthropoda</taxon>
        <taxon>Hexapoda</taxon>
        <taxon>Insecta</taxon>
        <taxon>Pterygota</taxon>
        <taxon>Neoptera</taxon>
        <taxon>Endopterygota</taxon>
        <taxon>Diptera</taxon>
        <taxon>Brachycera</taxon>
        <taxon>Muscomorpha</taxon>
        <taxon>Muscoidea</taxon>
        <taxon>Muscidae</taxon>
        <taxon>Haematobia</taxon>
    </lineage>
</organism>
<protein>
    <recommendedName>
        <fullName>Angiotensin-converting enzyme</fullName>
        <ecNumber>3.4.15.1</ecNumber>
    </recommendedName>
    <alternativeName>
        <fullName>Dipeptidyl carboxypeptidase I</fullName>
    </alternativeName>
    <alternativeName>
        <fullName>Kininase II</fullName>
    </alternativeName>
</protein>
<sequence length="611" mass="70506">MKLLVVTILAGLAVCHGATKEEIVATEYLQNINKELAKHTNVETEVSWAYASNITDENERLRNEISAENAKFLKEVAKDIQKFNWRTYGSADVRRQFKSLSKTGYSALPAEDYAELLEVLSAMESNFAKVRVCDYKNSAKCDLSLDPEIEEIITKSRDPEELKYYWTQFYDKAGTPTRSNFEKYVELNTKSAKLNNFTDGAEVWLDEYEDATFEDQLEAIFEDIKPLYDQVHGYVRYRLNKFYGDEVVSKTGPLPMHLLGNMWAQQWSSIADIVSPFPEKPLVDVSDEMVAQGYTPLKMFQMGDDFFQSMGLKKLPQEFWDKSILEKPDDGRDLVCHASAWDFYLTDDVRIKQCTRVTQDQFFTVHHEMGHIQYFLQYQHQPFVYRTGANPGFHEAVGDVLSLSVSTPKHLERVGLLKNYVSDNEARINQLFLTALDKIVFLPFAFTMDKYRWALFRGQADKSEWNCAFWKLREEYSGIEPPVVRTEKDFDAPAKYHVSADVEYLRYLVSFIIQFQFYKSACITAGEYVPNQTEYPLDNCDIYGSKEAGKLFENMLSLGASKPWPDALEAFNGERTMTGKAIAEYFEPLRVWLEAVAVESLCHQRYKNVDL</sequence>
<accession>Q10715</accession>
<comment type="function">
    <text>Involved in the specific maturation or degradation of a number of bioactive peptides.</text>
</comment>
<comment type="catalytic activity">
    <reaction>
        <text>Release of a C-terminal dipeptide, oligopeptide-|-Xaa-Yaa, when Xaa is not Pro, and Yaa is neither Asp nor Glu. Thus, conversion of angiotensin I to angiotensin II, with increase in vasoconstrictor activity, but no action on angiotensin II.</text>
        <dbReference type="EC" id="3.4.15.1"/>
    </reaction>
</comment>
<comment type="cofactor">
    <cofactor evidence="1">
        <name>Zn(2+)</name>
        <dbReference type="ChEBI" id="CHEBI:29105"/>
    </cofactor>
    <text evidence="1">Binds 1 zinc ion per subunit.</text>
</comment>
<comment type="subcellular location">
    <subcellularLocation>
        <location evidence="4">Secreted</location>
        <location evidence="4">Extracellular space</location>
    </subcellularLocation>
</comment>
<comment type="tissue specificity">
    <text>Expressed in the compound ganglion and in the posterior region of the midgut.</text>
</comment>
<comment type="similarity">
    <text evidence="4">Belongs to the peptidase M2 family.</text>
</comment>
<evidence type="ECO:0000250" key="1"/>
<evidence type="ECO:0000255" key="2"/>
<evidence type="ECO:0000255" key="3">
    <source>
        <dbReference type="PROSITE-ProRule" id="PRU01355"/>
    </source>
</evidence>
<evidence type="ECO:0000305" key="4"/>
<reference key="1">
    <citation type="journal article" date="1996" name="Eur. J. Biochem.">
        <title>Cloning and characterisation of angiotensin-converting enzyme from the dipteran species, Haematobia irritans exigua, and its expression in the maturing male reproductive system.</title>
        <authorList>
            <person name="Wijffels G.L."/>
            <person name="Fitzgerald C."/>
            <person name="Gough J."/>
            <person name="Riding G.A."/>
            <person name="Elvin C."/>
            <person name="Kemp D.J."/>
            <person name="Willadsen P."/>
        </authorList>
    </citation>
    <scope>NUCLEOTIDE SEQUENCE [GENOMIC DNA]</scope>
</reference>
<gene>
    <name type="primary">ACE</name>
</gene>
<keyword id="KW-0121">Carboxypeptidase</keyword>
<keyword id="KW-1015">Disulfide bond</keyword>
<keyword id="KW-0325">Glycoprotein</keyword>
<keyword id="KW-0378">Hydrolase</keyword>
<keyword id="KW-0479">Metal-binding</keyword>
<keyword id="KW-0482">Metalloprotease</keyword>
<keyword id="KW-0645">Protease</keyword>
<keyword id="KW-0964">Secreted</keyword>
<keyword id="KW-0732">Signal</keyword>
<keyword id="KW-0862">Zinc</keyword>
<feature type="signal peptide" evidence="2">
    <location>
        <begin position="1"/>
        <end position="17"/>
    </location>
</feature>
<feature type="chain" id="PRO_0000028565" description="Angiotensin-converting enzyme">
    <location>
        <begin position="18"/>
        <end position="611"/>
    </location>
</feature>
<feature type="domain" description="Peptidase M2" evidence="3">
    <location>
        <begin position="19"/>
        <end position="607"/>
    </location>
</feature>
<feature type="active site" description="Proton acceptor" evidence="3">
    <location>
        <position position="368"/>
    </location>
</feature>
<feature type="active site" description="Proton donor" evidence="3">
    <location>
        <position position="497"/>
    </location>
</feature>
<feature type="binding site" evidence="3">
    <location>
        <position position="367"/>
    </location>
    <ligand>
        <name>Zn(2+)</name>
        <dbReference type="ChEBI" id="CHEBI:29105"/>
        <note>catalytic</note>
    </ligand>
</feature>
<feature type="binding site" evidence="3">
    <location>
        <position position="371"/>
    </location>
    <ligand>
        <name>Zn(2+)</name>
        <dbReference type="ChEBI" id="CHEBI:29105"/>
        <note>catalytic</note>
    </ligand>
</feature>
<feature type="binding site" evidence="3">
    <location>
        <position position="395"/>
    </location>
    <ligand>
        <name>Zn(2+)</name>
        <dbReference type="ChEBI" id="CHEBI:29105"/>
        <note>catalytic</note>
    </ligand>
</feature>
<feature type="glycosylation site" description="N-linked (GlcNAc...) asparagine" evidence="2">
    <location>
        <position position="53"/>
    </location>
</feature>
<feature type="glycosylation site" description="N-linked (GlcNAc...) asparagine" evidence="2">
    <location>
        <position position="196"/>
    </location>
</feature>
<feature type="glycosylation site" description="N-linked (GlcNAc...) asparagine" evidence="2">
    <location>
        <position position="531"/>
    </location>
</feature>
<feature type="disulfide bond" evidence="3">
    <location>
        <begin position="133"/>
        <end position="141"/>
    </location>
</feature>
<feature type="disulfide bond" evidence="3">
    <location>
        <begin position="336"/>
        <end position="354"/>
    </location>
</feature>
<feature type="disulfide bond" evidence="3">
    <location>
        <begin position="522"/>
        <end position="540"/>
    </location>
</feature>
<dbReference type="EC" id="3.4.15.1"/>
<dbReference type="EMBL" id="L43965">
    <property type="protein sequence ID" value="AAA70427.1"/>
    <property type="molecule type" value="Genomic_DNA"/>
</dbReference>
<dbReference type="PIR" id="S65472">
    <property type="entry name" value="S65472"/>
</dbReference>
<dbReference type="SMR" id="Q10715"/>
<dbReference type="MEROPS" id="M02.003"/>
<dbReference type="GlyCosmos" id="Q10715">
    <property type="glycosylation" value="3 sites, No reported glycans"/>
</dbReference>
<dbReference type="GO" id="GO:0005615">
    <property type="term" value="C:extracellular space"/>
    <property type="evidence" value="ECO:0007669"/>
    <property type="project" value="TreeGrafter"/>
</dbReference>
<dbReference type="GO" id="GO:0005886">
    <property type="term" value="C:plasma membrane"/>
    <property type="evidence" value="ECO:0007669"/>
    <property type="project" value="TreeGrafter"/>
</dbReference>
<dbReference type="GO" id="GO:0004180">
    <property type="term" value="F:carboxypeptidase activity"/>
    <property type="evidence" value="ECO:0007669"/>
    <property type="project" value="UniProtKB-KW"/>
</dbReference>
<dbReference type="GO" id="GO:0046872">
    <property type="term" value="F:metal ion binding"/>
    <property type="evidence" value="ECO:0007669"/>
    <property type="project" value="UniProtKB-KW"/>
</dbReference>
<dbReference type="GO" id="GO:0008237">
    <property type="term" value="F:metallopeptidase activity"/>
    <property type="evidence" value="ECO:0007669"/>
    <property type="project" value="UniProtKB-KW"/>
</dbReference>
<dbReference type="GO" id="GO:0008241">
    <property type="term" value="F:peptidyl-dipeptidase activity"/>
    <property type="evidence" value="ECO:0007669"/>
    <property type="project" value="UniProtKB-EC"/>
</dbReference>
<dbReference type="GO" id="GO:0006508">
    <property type="term" value="P:proteolysis"/>
    <property type="evidence" value="ECO:0007669"/>
    <property type="project" value="UniProtKB-KW"/>
</dbReference>
<dbReference type="CDD" id="cd06461">
    <property type="entry name" value="M2_ACE"/>
    <property type="match status" value="1"/>
</dbReference>
<dbReference type="FunFam" id="1.10.1370.30:FF:000004">
    <property type="entry name" value="Angiotensin-converting enzyme"/>
    <property type="match status" value="1"/>
</dbReference>
<dbReference type="Gene3D" id="1.10.1370.30">
    <property type="match status" value="1"/>
</dbReference>
<dbReference type="InterPro" id="IPR001548">
    <property type="entry name" value="Peptidase_M2"/>
</dbReference>
<dbReference type="PANTHER" id="PTHR10514">
    <property type="entry name" value="ANGIOTENSIN-CONVERTING ENZYME"/>
    <property type="match status" value="1"/>
</dbReference>
<dbReference type="PANTHER" id="PTHR10514:SF44">
    <property type="entry name" value="ANGIOTENSIN-CONVERTING ENZYME-RELATED"/>
    <property type="match status" value="1"/>
</dbReference>
<dbReference type="Pfam" id="PF01401">
    <property type="entry name" value="Peptidase_M2"/>
    <property type="match status" value="1"/>
</dbReference>
<dbReference type="PRINTS" id="PR00791">
    <property type="entry name" value="PEPDIPTASEA"/>
</dbReference>
<dbReference type="SUPFAM" id="SSF55486">
    <property type="entry name" value="Metalloproteases ('zincins'), catalytic domain"/>
    <property type="match status" value="1"/>
</dbReference>
<dbReference type="PROSITE" id="PS52011">
    <property type="entry name" value="PEPTIDASE_M2"/>
    <property type="match status" value="1"/>
</dbReference>
<dbReference type="PROSITE" id="PS00142">
    <property type="entry name" value="ZINC_PROTEASE"/>
    <property type="match status" value="1"/>
</dbReference>
<proteinExistence type="evidence at transcript level"/>